<reference key="1">
    <citation type="journal article" date="2009" name="Infect. Immun.">
        <title>Comparative genomics reveal extensive transposon-mediated genomic plasticity and diversity among potential effector proteins within the genus Coxiella.</title>
        <authorList>
            <person name="Beare P.A."/>
            <person name="Unsworth N."/>
            <person name="Andoh M."/>
            <person name="Voth D.E."/>
            <person name="Omsland A."/>
            <person name="Gilk S.D."/>
            <person name="Williams K.P."/>
            <person name="Sobral B.W."/>
            <person name="Kupko J.J. III"/>
            <person name="Porcella S.F."/>
            <person name="Samuel J.E."/>
            <person name="Heinzen R.A."/>
        </authorList>
    </citation>
    <scope>NUCLEOTIDE SEQUENCE [LARGE SCALE GENOMIC DNA]</scope>
    <source>
        <strain>Dugway 5J108-111</strain>
    </source>
</reference>
<evidence type="ECO:0000255" key="1">
    <source>
        <dbReference type="HAMAP-Rule" id="MF_00318"/>
    </source>
</evidence>
<gene>
    <name evidence="1" type="primary">eno</name>
    <name type="ordered locus">CBUD_0327</name>
</gene>
<accession>A9KDH7</accession>
<keyword id="KW-0963">Cytoplasm</keyword>
<keyword id="KW-0324">Glycolysis</keyword>
<keyword id="KW-0456">Lyase</keyword>
<keyword id="KW-0460">Magnesium</keyword>
<keyword id="KW-0479">Metal-binding</keyword>
<keyword id="KW-0964">Secreted</keyword>
<dbReference type="EC" id="4.2.1.11" evidence="1"/>
<dbReference type="EMBL" id="CP000733">
    <property type="protein sequence ID" value="ABS77174.1"/>
    <property type="molecule type" value="Genomic_DNA"/>
</dbReference>
<dbReference type="RefSeq" id="WP_011996523.1">
    <property type="nucleotide sequence ID" value="NC_009727.1"/>
</dbReference>
<dbReference type="SMR" id="A9KDH7"/>
<dbReference type="KEGG" id="cbd:CBUD_0327"/>
<dbReference type="HOGENOM" id="CLU_031223_2_1_6"/>
<dbReference type="UniPathway" id="UPA00109">
    <property type="reaction ID" value="UER00187"/>
</dbReference>
<dbReference type="Proteomes" id="UP000008555">
    <property type="component" value="Chromosome"/>
</dbReference>
<dbReference type="GO" id="GO:0009986">
    <property type="term" value="C:cell surface"/>
    <property type="evidence" value="ECO:0007669"/>
    <property type="project" value="UniProtKB-SubCell"/>
</dbReference>
<dbReference type="GO" id="GO:0005576">
    <property type="term" value="C:extracellular region"/>
    <property type="evidence" value="ECO:0007669"/>
    <property type="project" value="UniProtKB-SubCell"/>
</dbReference>
<dbReference type="GO" id="GO:0000015">
    <property type="term" value="C:phosphopyruvate hydratase complex"/>
    <property type="evidence" value="ECO:0007669"/>
    <property type="project" value="InterPro"/>
</dbReference>
<dbReference type="GO" id="GO:0000287">
    <property type="term" value="F:magnesium ion binding"/>
    <property type="evidence" value="ECO:0007669"/>
    <property type="project" value="UniProtKB-UniRule"/>
</dbReference>
<dbReference type="GO" id="GO:0004634">
    <property type="term" value="F:phosphopyruvate hydratase activity"/>
    <property type="evidence" value="ECO:0007669"/>
    <property type="project" value="UniProtKB-UniRule"/>
</dbReference>
<dbReference type="GO" id="GO:0006096">
    <property type="term" value="P:glycolytic process"/>
    <property type="evidence" value="ECO:0007669"/>
    <property type="project" value="UniProtKB-UniRule"/>
</dbReference>
<dbReference type="CDD" id="cd03313">
    <property type="entry name" value="enolase"/>
    <property type="match status" value="1"/>
</dbReference>
<dbReference type="FunFam" id="3.20.20.120:FF:000001">
    <property type="entry name" value="Enolase"/>
    <property type="match status" value="1"/>
</dbReference>
<dbReference type="FunFam" id="3.30.390.10:FF:000001">
    <property type="entry name" value="Enolase"/>
    <property type="match status" value="1"/>
</dbReference>
<dbReference type="Gene3D" id="3.20.20.120">
    <property type="entry name" value="Enolase-like C-terminal domain"/>
    <property type="match status" value="1"/>
</dbReference>
<dbReference type="Gene3D" id="3.30.390.10">
    <property type="entry name" value="Enolase-like, N-terminal domain"/>
    <property type="match status" value="1"/>
</dbReference>
<dbReference type="HAMAP" id="MF_00318">
    <property type="entry name" value="Enolase"/>
    <property type="match status" value="1"/>
</dbReference>
<dbReference type="InterPro" id="IPR000941">
    <property type="entry name" value="Enolase"/>
</dbReference>
<dbReference type="InterPro" id="IPR036849">
    <property type="entry name" value="Enolase-like_C_sf"/>
</dbReference>
<dbReference type="InterPro" id="IPR029017">
    <property type="entry name" value="Enolase-like_N"/>
</dbReference>
<dbReference type="InterPro" id="IPR020810">
    <property type="entry name" value="Enolase_C"/>
</dbReference>
<dbReference type="InterPro" id="IPR020809">
    <property type="entry name" value="Enolase_CS"/>
</dbReference>
<dbReference type="InterPro" id="IPR020811">
    <property type="entry name" value="Enolase_N"/>
</dbReference>
<dbReference type="NCBIfam" id="TIGR01060">
    <property type="entry name" value="eno"/>
    <property type="match status" value="1"/>
</dbReference>
<dbReference type="PANTHER" id="PTHR11902">
    <property type="entry name" value="ENOLASE"/>
    <property type="match status" value="1"/>
</dbReference>
<dbReference type="PANTHER" id="PTHR11902:SF1">
    <property type="entry name" value="ENOLASE"/>
    <property type="match status" value="1"/>
</dbReference>
<dbReference type="Pfam" id="PF00113">
    <property type="entry name" value="Enolase_C"/>
    <property type="match status" value="1"/>
</dbReference>
<dbReference type="Pfam" id="PF03952">
    <property type="entry name" value="Enolase_N"/>
    <property type="match status" value="1"/>
</dbReference>
<dbReference type="PIRSF" id="PIRSF001400">
    <property type="entry name" value="Enolase"/>
    <property type="match status" value="1"/>
</dbReference>
<dbReference type="PRINTS" id="PR00148">
    <property type="entry name" value="ENOLASE"/>
</dbReference>
<dbReference type="SFLD" id="SFLDF00002">
    <property type="entry name" value="enolase"/>
    <property type="match status" value="1"/>
</dbReference>
<dbReference type="SFLD" id="SFLDG00178">
    <property type="entry name" value="enolase"/>
    <property type="match status" value="1"/>
</dbReference>
<dbReference type="SMART" id="SM01192">
    <property type="entry name" value="Enolase_C"/>
    <property type="match status" value="1"/>
</dbReference>
<dbReference type="SMART" id="SM01193">
    <property type="entry name" value="Enolase_N"/>
    <property type="match status" value="1"/>
</dbReference>
<dbReference type="SUPFAM" id="SSF51604">
    <property type="entry name" value="Enolase C-terminal domain-like"/>
    <property type="match status" value="1"/>
</dbReference>
<dbReference type="SUPFAM" id="SSF54826">
    <property type="entry name" value="Enolase N-terminal domain-like"/>
    <property type="match status" value="1"/>
</dbReference>
<dbReference type="PROSITE" id="PS00164">
    <property type="entry name" value="ENOLASE"/>
    <property type="match status" value="1"/>
</dbReference>
<name>ENO_COXBN</name>
<sequence length="428" mass="46625">MTATITDINAHEILDSRANPTLEVRVTLSSQAYGCAAVPSGASTGEREAVELRDNNLERYGGKGVLQAVENVNGPIRDALLGQDPRSQEEIDRIMIELDGTENKANLGANAILGVSLAVAYAAANNADLPLYRYLGGDGGPFSMPVPMMNIINGGAHATNNLDFQEFMIVPVGAPTFAEALRYGAEVFHALKKRLVSRGLMSAVGDEGGFAPDLPNNEAAFELILEAIEDANYVPGKDIYLALDAASSELYQNGRYDFENNQLTSEEMIDRLTEWTKKYPVISIEDGLSENDWAGWKLLTERLENKVQLVGDDIFVTNPDILEKGIKKNIANAILVKLNQIGTLTETLATVGLAKSNKYGVIISHRSGETEDTTIADLAVATDARQIKTGSLCRSDRVAKYNRLLQIERELNDQAPYAGKEAFLFNRK</sequence>
<comment type="function">
    <text evidence="1">Catalyzes the reversible conversion of 2-phosphoglycerate (2-PG) into phosphoenolpyruvate (PEP). It is essential for the degradation of carbohydrates via glycolysis.</text>
</comment>
<comment type="catalytic activity">
    <reaction evidence="1">
        <text>(2R)-2-phosphoglycerate = phosphoenolpyruvate + H2O</text>
        <dbReference type="Rhea" id="RHEA:10164"/>
        <dbReference type="ChEBI" id="CHEBI:15377"/>
        <dbReference type="ChEBI" id="CHEBI:58289"/>
        <dbReference type="ChEBI" id="CHEBI:58702"/>
        <dbReference type="EC" id="4.2.1.11"/>
    </reaction>
</comment>
<comment type="cofactor">
    <cofactor evidence="1">
        <name>Mg(2+)</name>
        <dbReference type="ChEBI" id="CHEBI:18420"/>
    </cofactor>
    <text evidence="1">Binds a second Mg(2+) ion via substrate during catalysis.</text>
</comment>
<comment type="pathway">
    <text evidence="1">Carbohydrate degradation; glycolysis; pyruvate from D-glyceraldehyde 3-phosphate: step 4/5.</text>
</comment>
<comment type="subunit">
    <text evidence="1">Component of the RNA degradosome, a multiprotein complex involved in RNA processing and mRNA degradation.</text>
</comment>
<comment type="subcellular location">
    <subcellularLocation>
        <location evidence="1">Cytoplasm</location>
    </subcellularLocation>
    <subcellularLocation>
        <location evidence="1">Secreted</location>
    </subcellularLocation>
    <subcellularLocation>
        <location evidence="1">Cell surface</location>
    </subcellularLocation>
    <text evidence="1">Fractions of enolase are present in both the cytoplasm and on the cell surface.</text>
</comment>
<comment type="similarity">
    <text evidence="1">Belongs to the enolase family.</text>
</comment>
<organism>
    <name type="scientific">Coxiella burnetii (strain Dugway 5J108-111)</name>
    <dbReference type="NCBI Taxonomy" id="434922"/>
    <lineage>
        <taxon>Bacteria</taxon>
        <taxon>Pseudomonadati</taxon>
        <taxon>Pseudomonadota</taxon>
        <taxon>Gammaproteobacteria</taxon>
        <taxon>Legionellales</taxon>
        <taxon>Coxiellaceae</taxon>
        <taxon>Coxiella</taxon>
    </lineage>
</organism>
<feature type="chain" id="PRO_1000079130" description="Enolase">
    <location>
        <begin position="1"/>
        <end position="428"/>
    </location>
</feature>
<feature type="active site" description="Proton donor" evidence="1">
    <location>
        <position position="207"/>
    </location>
</feature>
<feature type="active site" description="Proton acceptor" evidence="1">
    <location>
        <position position="337"/>
    </location>
</feature>
<feature type="binding site" evidence="1">
    <location>
        <position position="165"/>
    </location>
    <ligand>
        <name>(2R)-2-phosphoglycerate</name>
        <dbReference type="ChEBI" id="CHEBI:58289"/>
    </ligand>
</feature>
<feature type="binding site" evidence="1">
    <location>
        <position position="244"/>
    </location>
    <ligand>
        <name>Mg(2+)</name>
        <dbReference type="ChEBI" id="CHEBI:18420"/>
    </ligand>
</feature>
<feature type="binding site" evidence="1">
    <location>
        <position position="285"/>
    </location>
    <ligand>
        <name>Mg(2+)</name>
        <dbReference type="ChEBI" id="CHEBI:18420"/>
    </ligand>
</feature>
<feature type="binding site" evidence="1">
    <location>
        <position position="312"/>
    </location>
    <ligand>
        <name>Mg(2+)</name>
        <dbReference type="ChEBI" id="CHEBI:18420"/>
    </ligand>
</feature>
<feature type="binding site" evidence="1">
    <location>
        <position position="337"/>
    </location>
    <ligand>
        <name>(2R)-2-phosphoglycerate</name>
        <dbReference type="ChEBI" id="CHEBI:58289"/>
    </ligand>
</feature>
<feature type="binding site" evidence="1">
    <location>
        <position position="366"/>
    </location>
    <ligand>
        <name>(2R)-2-phosphoglycerate</name>
        <dbReference type="ChEBI" id="CHEBI:58289"/>
    </ligand>
</feature>
<feature type="binding site" evidence="1">
    <location>
        <position position="367"/>
    </location>
    <ligand>
        <name>(2R)-2-phosphoglycerate</name>
        <dbReference type="ChEBI" id="CHEBI:58289"/>
    </ligand>
</feature>
<feature type="binding site" evidence="1">
    <location>
        <position position="388"/>
    </location>
    <ligand>
        <name>(2R)-2-phosphoglycerate</name>
        <dbReference type="ChEBI" id="CHEBI:58289"/>
    </ligand>
</feature>
<proteinExistence type="inferred from homology"/>
<protein>
    <recommendedName>
        <fullName evidence="1">Enolase</fullName>
        <ecNumber evidence="1">4.2.1.11</ecNumber>
    </recommendedName>
    <alternativeName>
        <fullName evidence="1">2-phospho-D-glycerate hydro-lyase</fullName>
    </alternativeName>
    <alternativeName>
        <fullName evidence="1">2-phosphoglycerate dehydratase</fullName>
    </alternativeName>
</protein>